<feature type="signal peptide" evidence="3">
    <location>
        <begin position="1"/>
        <end position="18"/>
    </location>
</feature>
<feature type="chain" id="PRO_0000454007" description="Apolipoprotein E">
    <location>
        <begin position="19"/>
        <end position="298"/>
    </location>
</feature>
<feature type="repeat" description="1">
    <location>
        <begin position="74"/>
        <end position="94"/>
    </location>
</feature>
<feature type="repeat" description="2">
    <location>
        <begin position="95"/>
        <end position="116"/>
    </location>
</feature>
<feature type="repeat" description="3">
    <location>
        <begin position="117"/>
        <end position="138"/>
    </location>
</feature>
<feature type="repeat" description="4">
    <location>
        <begin position="139"/>
        <end position="160"/>
    </location>
</feature>
<feature type="repeat" description="5">
    <location>
        <begin position="161"/>
        <end position="182"/>
    </location>
</feature>
<feature type="repeat" description="6">
    <location>
        <begin position="183"/>
        <end position="203"/>
    </location>
</feature>
<feature type="repeat" description="7">
    <location>
        <begin position="204"/>
        <end position="221"/>
    </location>
</feature>
<feature type="repeat" description="8">
    <location>
        <begin position="222"/>
        <end position="243"/>
    </location>
</feature>
<feature type="region of interest" description="8 X 22 AA approximate tandem repeats">
    <location>
        <begin position="95"/>
        <end position="243"/>
    </location>
</feature>
<feature type="region of interest" description="LDL and other lipoprotein receptors binding" evidence="1">
    <location>
        <begin position="151"/>
        <end position="161"/>
    </location>
</feature>
<feature type="region of interest" description="Lipid-binding and lipoprotein association" evidence="1">
    <location>
        <begin position="203"/>
        <end position="271"/>
    </location>
</feature>
<feature type="region of interest" description="Specificity for association with VLDL" evidence="1">
    <location>
        <begin position="259"/>
        <end position="271"/>
    </location>
</feature>
<feature type="binding site" evidence="1">
    <location>
        <begin position="155"/>
        <end position="158"/>
    </location>
    <ligand>
        <name>heparin</name>
        <dbReference type="ChEBI" id="CHEBI:28304"/>
    </ligand>
</feature>
<feature type="binding site" evidence="1">
    <location>
        <begin position="217"/>
        <end position="224"/>
    </location>
    <ligand>
        <name>heparin</name>
        <dbReference type="ChEBI" id="CHEBI:28304"/>
    </ligand>
</feature>
<feature type="modified residue" description="Methionine sulfoxide" evidence="2">
    <location>
        <position position="137"/>
    </location>
</feature>
<feature type="modified residue" description="Phosphoserine" evidence="1">
    <location>
        <position position="141"/>
    </location>
</feature>
<reference key="1">
    <citation type="submission" date="2018-02" db="EMBL/GenBank/DDBJ databases">
        <title>The 200 mammals project: sequencing genomes by a novel cost-effective method, yielding a high resolution annotation of the human genome.</title>
        <authorList>
            <person name="Johnson J."/>
            <person name="Muren E."/>
            <person name="Swofford R."/>
            <person name="Turner-Maier J."/>
            <person name="Marinescu V."/>
            <person name="Genereux D."/>
            <person name="Birren B."/>
            <person name="Karlsson E.K."/>
            <person name="Lindblad-Toh K."/>
        </authorList>
    </citation>
    <scope>NUCLEOTIDE SEQUENCE [LARGE SCALE GENOMIC DNA]</scope>
</reference>
<reference key="2">
    <citation type="unpublished observations" date="2021-07">
        <authorList>
            <person name="Puppione D.L."/>
        </authorList>
    </citation>
    <scope>IDENTIFICATION</scope>
</reference>
<evidence type="ECO:0000250" key="1">
    <source>
        <dbReference type="UniProtKB" id="P02649"/>
    </source>
</evidence>
<evidence type="ECO:0000250" key="2">
    <source>
        <dbReference type="UniProtKB" id="P08226"/>
    </source>
</evidence>
<evidence type="ECO:0000255" key="3"/>
<evidence type="ECO:0000305" key="4"/>
<keyword id="KW-0162">Chylomicron</keyword>
<keyword id="KW-0967">Endosome</keyword>
<keyword id="KW-0272">Extracellular matrix</keyword>
<keyword id="KW-0325">Glycoprotein</keyword>
<keyword id="KW-0345">HDL</keyword>
<keyword id="KW-0358">Heparin-binding</keyword>
<keyword id="KW-0445">Lipid transport</keyword>
<keyword id="KW-0446">Lipid-binding</keyword>
<keyword id="KW-0558">Oxidation</keyword>
<keyword id="KW-0597">Phosphoprotein</keyword>
<keyword id="KW-0677">Repeat</keyword>
<keyword id="KW-0964">Secreted</keyword>
<keyword id="KW-0732">Signal</keyword>
<keyword id="KW-0813">Transport</keyword>
<keyword id="KW-0850">VLDL</keyword>
<comment type="function">
    <text evidence="1">APOE is an apolipoprotein, a protein associating with lipid particles, that mainly functions in lipoprotein-mediated lipid transport between organs via the plasma and interstitial fluids. APOE is a core component of plasma lipoproteins and is involved in their production, conversion and clearance. Apolipoproteins are amphipathic molecules that interact both with lipids of the lipoprotein particle core and the aqueous environment of the plasma. As such, APOE associates with chylomicrons, chylomicron remnants, very low density lipoproteins (VLDL) and intermediate density lipoproteins (IDL) but shows a preferential binding to high-density lipoproteins (HDL). It also binds a wide range of cellular receptors including the LDL receptor/LDLR, the LDL receptor-related proteins LRP1, LRP2 and LRP8 and the very low-density lipoprotein receptor/VLDLR that mediate the cellular uptake of the APOE-containing lipoprotein particles. Finally, APOE also has a heparin-binding activity and binds heparan-sulfate proteoglycans on the surface of cells, a property that supports the capture and the receptor-mediated uptake of APOE-containing lipoproteins by cells. A main function of APOE is to mediate lipoprotein clearance through the uptake of chylomicrons, VLDLs, and HDLs by hepatocytes. APOE is also involved in the biosynthesis by the liver of VLDLs as well as their uptake by peripheral tissues ensuring the delivery of triglycerides and energy storage in muscle, heart and adipose tissues. By participating in the lipoprotein-mediated distribution of lipids among tissues, APOE plays a critical role in plasma and tissues lipid homeostasis. APOE is also involved in two steps of reverse cholesterol transport, the HDLs-mediated transport of cholesterol from peripheral tissues to the liver, and thereby plays an important role in cholesterol homeostasis. First, it is functionally associated with ABCA1 in the biogenesis of HDLs in tissues. Second, it is enriched in circulating HDLs and mediates their uptake by hepatocytes. APOE also plays an important role in lipid transport in the central nervous system, regulating neuron survival and sprouting.</text>
</comment>
<comment type="subunit">
    <text evidence="1">Homotetramer. May interact with ABCA1; functionally associated with ABCA1 in the biogenesis of HDLs. May interact with APP/A4 amyloid-beta peptide; the interaction is extremely stable in vitro but its physiological significance is unclear. May interact with MAPT. May interact with MAP2. In the cerebrospinal fluid, interacts with secreted SORL1. Interacts with PMEL; this allows the loading of PMEL luminal fragment on ILVs to induce fibril nucleation.</text>
</comment>
<comment type="subcellular location">
    <subcellularLocation>
        <location evidence="1">Secreted</location>
    </subcellularLocation>
    <subcellularLocation>
        <location evidence="1">Secreted</location>
        <location evidence="1">Extracellular space</location>
    </subcellularLocation>
    <subcellularLocation>
        <location evidence="1">Secreted</location>
        <location evidence="1">Extracellular space</location>
        <location evidence="1">Extracellular matrix</location>
    </subcellularLocation>
    <subcellularLocation>
        <location evidence="1">Extracellular vesicle</location>
    </subcellularLocation>
    <subcellularLocation>
        <location evidence="1">Endosome</location>
        <location evidence="1">Multivesicular body</location>
    </subcellularLocation>
    <text evidence="1">In the plasma, APOE is associated with chylomicrons, chylomicrons remnants, VLDL, LDL and HDL lipoproteins. Lipid poor oligomeric APOE is associated with the extracellular matrix in a calcium- and heparan-sulfate proteoglycans-dependent manner. Lipidation induces the release from the extracellular matrix. Colocalizes with CD63 and PMEL at exosomes and in intraluminal vesicles within multivesicular endosomes.</text>
</comment>
<comment type="PTM">
    <text evidence="1">APOE exists as multiple glycosylated and sialylated glycoforms within cells and in plasma. The extent of glycosylation and sialylation are tissue and context specific.</text>
</comment>
<comment type="PTM">
    <text evidence="1">Glycated in plasma VLDL.</text>
</comment>
<comment type="PTM">
    <text evidence="1">Phosphorylated by FAM20C in the extracellular medium.</text>
</comment>
<comment type="similarity">
    <text evidence="4">Belongs to the apolipoprotein A1/A4/E family.</text>
</comment>
<accession>P0DUY3</accession>
<dbReference type="EMBL" id="PVKK010002674">
    <property type="status" value="NOT_ANNOTATED_CDS"/>
    <property type="molecule type" value="Genomic_DNA"/>
</dbReference>
<dbReference type="SMR" id="P0DUY3"/>
<dbReference type="GO" id="GO:0042627">
    <property type="term" value="C:chylomicron"/>
    <property type="evidence" value="ECO:0007669"/>
    <property type="project" value="UniProtKB-KW"/>
</dbReference>
<dbReference type="GO" id="GO:0070062">
    <property type="term" value="C:extracellular exosome"/>
    <property type="evidence" value="ECO:0000250"/>
    <property type="project" value="UniProtKB"/>
</dbReference>
<dbReference type="GO" id="GO:0034364">
    <property type="term" value="C:high-density lipoprotein particle"/>
    <property type="evidence" value="ECO:0007669"/>
    <property type="project" value="UniProtKB-KW"/>
</dbReference>
<dbReference type="GO" id="GO:0034362">
    <property type="term" value="C:low-density lipoprotein particle"/>
    <property type="evidence" value="ECO:0007669"/>
    <property type="project" value="TreeGrafter"/>
</dbReference>
<dbReference type="GO" id="GO:0097487">
    <property type="term" value="C:multivesicular body, internal vesicle"/>
    <property type="evidence" value="ECO:0000250"/>
    <property type="project" value="UniProtKB"/>
</dbReference>
<dbReference type="GO" id="GO:0034361">
    <property type="term" value="C:very-low-density lipoprotein particle"/>
    <property type="evidence" value="ECO:0007669"/>
    <property type="project" value="UniProtKB-KW"/>
</dbReference>
<dbReference type="GO" id="GO:0120020">
    <property type="term" value="F:cholesterol transfer activity"/>
    <property type="evidence" value="ECO:0007669"/>
    <property type="project" value="TreeGrafter"/>
</dbReference>
<dbReference type="GO" id="GO:0008201">
    <property type="term" value="F:heparin binding"/>
    <property type="evidence" value="ECO:0007669"/>
    <property type="project" value="UniProtKB-KW"/>
</dbReference>
<dbReference type="GO" id="GO:0060228">
    <property type="term" value="F:phosphatidylcholine-sterol O-acyltransferase activator activity"/>
    <property type="evidence" value="ECO:0007669"/>
    <property type="project" value="TreeGrafter"/>
</dbReference>
<dbReference type="GO" id="GO:0005543">
    <property type="term" value="F:phospholipid binding"/>
    <property type="evidence" value="ECO:0007669"/>
    <property type="project" value="TreeGrafter"/>
</dbReference>
<dbReference type="GO" id="GO:0055090">
    <property type="term" value="P:acylglycerol homeostasis"/>
    <property type="evidence" value="ECO:0007669"/>
    <property type="project" value="TreeGrafter"/>
</dbReference>
<dbReference type="GO" id="GO:0033344">
    <property type="term" value="P:cholesterol efflux"/>
    <property type="evidence" value="ECO:0007669"/>
    <property type="project" value="TreeGrafter"/>
</dbReference>
<dbReference type="GO" id="GO:0008203">
    <property type="term" value="P:cholesterol metabolic process"/>
    <property type="evidence" value="ECO:0007669"/>
    <property type="project" value="TreeGrafter"/>
</dbReference>
<dbReference type="GO" id="GO:0042157">
    <property type="term" value="P:lipoprotein metabolic process"/>
    <property type="evidence" value="ECO:0007669"/>
    <property type="project" value="InterPro"/>
</dbReference>
<dbReference type="GO" id="GO:0032438">
    <property type="term" value="P:melanosome organization"/>
    <property type="evidence" value="ECO:0000250"/>
    <property type="project" value="UniProtKB"/>
</dbReference>
<dbReference type="GO" id="GO:0033700">
    <property type="term" value="P:phospholipid efflux"/>
    <property type="evidence" value="ECO:0007669"/>
    <property type="project" value="TreeGrafter"/>
</dbReference>
<dbReference type="FunFam" id="1.20.120.20:FF:000002">
    <property type="entry name" value="Apolipoprotein E"/>
    <property type="match status" value="1"/>
</dbReference>
<dbReference type="FunFam" id="1.20.120.20:FF:000003">
    <property type="entry name" value="Apolipoprotein E"/>
    <property type="match status" value="1"/>
</dbReference>
<dbReference type="Gene3D" id="1.20.120.20">
    <property type="entry name" value="Apolipoprotein"/>
    <property type="match status" value="2"/>
</dbReference>
<dbReference type="InterPro" id="IPR000074">
    <property type="entry name" value="ApoA_E"/>
</dbReference>
<dbReference type="InterPro" id="IPR050163">
    <property type="entry name" value="Apolipoprotein_A1/A4/E"/>
</dbReference>
<dbReference type="PANTHER" id="PTHR18976">
    <property type="entry name" value="APOLIPOPROTEIN"/>
    <property type="match status" value="1"/>
</dbReference>
<dbReference type="PANTHER" id="PTHR18976:SF2">
    <property type="entry name" value="APOLIPOPROTEIN E"/>
    <property type="match status" value="1"/>
</dbReference>
<dbReference type="Pfam" id="PF01442">
    <property type="entry name" value="Apolipoprotein"/>
    <property type="match status" value="1"/>
</dbReference>
<dbReference type="SUPFAM" id="SSF58113">
    <property type="entry name" value="Apolipoprotein A-I"/>
    <property type="match status" value="1"/>
</dbReference>
<proteinExistence type="inferred from homology"/>
<protein>
    <recommendedName>
        <fullName>Apolipoprotein E</fullName>
        <shortName>Apo-E</shortName>
    </recommendedName>
</protein>
<name>APOE_CAVTS</name>
<organism>
    <name type="scientific">Cavia tschudii</name>
    <name type="common">Montane guinea pig</name>
    <dbReference type="NCBI Taxonomy" id="143287"/>
    <lineage>
        <taxon>Eukaryota</taxon>
        <taxon>Metazoa</taxon>
        <taxon>Chordata</taxon>
        <taxon>Craniata</taxon>
        <taxon>Vertebrata</taxon>
        <taxon>Euteleostomi</taxon>
        <taxon>Mammalia</taxon>
        <taxon>Eutheria</taxon>
        <taxon>Euarchontoglires</taxon>
        <taxon>Glires</taxon>
        <taxon>Rodentia</taxon>
        <taxon>Hystricomorpha</taxon>
        <taxon>Caviidae</taxon>
        <taxon>Cavia</taxon>
    </lineage>
</organism>
<gene>
    <name type="primary">APOE</name>
</gene>
<sequence>MKVLWAALVVTLLAGCRADVEPEVEVREPAVWQSGQPWELALSRFWDYLRWVQTLSDQVQEELLSNQVTQELTLLIEDTMKEVKDYKAELEKELGPVAEDTKARLAKELQAAQARLGADMEEVRNRLSQYRSEVQAMLGQSSEELRARLTSHLRKMRKRLQRDIDELQKRMAVYKAGAQEGAERGVSAIRERLGSLIEQGRLQALTSQPLQERAQAWGEQMRGRLEKVGSQARDRLEEVREQMEEVRVKVEEQAEAFQARLKSWFEPMMEDMRRQWAELIQKVQVAVGASTSAPSQEP</sequence>